<keyword id="KW-0963">Cytoplasm</keyword>
<keyword id="KW-0413">Isomerase</keyword>
<keyword id="KW-0627">Porphyrin biosynthesis</keyword>
<keyword id="KW-0663">Pyridoxal phosphate</keyword>
<name>GSA_DESHD</name>
<organism>
    <name type="scientific">Desulfitobacterium hafniense (strain DSM 10664 / DCB-2)</name>
    <dbReference type="NCBI Taxonomy" id="272564"/>
    <lineage>
        <taxon>Bacteria</taxon>
        <taxon>Bacillati</taxon>
        <taxon>Bacillota</taxon>
        <taxon>Clostridia</taxon>
        <taxon>Eubacteriales</taxon>
        <taxon>Desulfitobacteriaceae</taxon>
        <taxon>Desulfitobacterium</taxon>
    </lineage>
</organism>
<comment type="catalytic activity">
    <reaction evidence="1">
        <text>(S)-4-amino-5-oxopentanoate = 5-aminolevulinate</text>
        <dbReference type="Rhea" id="RHEA:14265"/>
        <dbReference type="ChEBI" id="CHEBI:57501"/>
        <dbReference type="ChEBI" id="CHEBI:356416"/>
        <dbReference type="EC" id="5.4.3.8"/>
    </reaction>
</comment>
<comment type="cofactor">
    <cofactor evidence="1">
        <name>pyridoxal 5'-phosphate</name>
        <dbReference type="ChEBI" id="CHEBI:597326"/>
    </cofactor>
</comment>
<comment type="pathway">
    <text evidence="1">Porphyrin-containing compound metabolism; protoporphyrin-IX biosynthesis; 5-aminolevulinate from L-glutamyl-tRNA(Glu): step 2/2.</text>
</comment>
<comment type="subunit">
    <text evidence="1">Homodimer.</text>
</comment>
<comment type="subcellular location">
    <subcellularLocation>
        <location evidence="1">Cytoplasm</location>
    </subcellularLocation>
</comment>
<comment type="similarity">
    <text evidence="1">Belongs to the class-III pyridoxal-phosphate-dependent aminotransferase family. HemL subfamily.</text>
</comment>
<protein>
    <recommendedName>
        <fullName evidence="1">Glutamate-1-semialdehyde 2,1-aminomutase</fullName>
        <shortName evidence="1">GSA</shortName>
        <ecNumber evidence="1">5.4.3.8</ecNumber>
    </recommendedName>
    <alternativeName>
        <fullName evidence="1">Glutamate-1-semialdehyde aminotransferase</fullName>
        <shortName evidence="1">GSA-AT</shortName>
    </alternativeName>
</protein>
<accession>B8G2L6</accession>
<dbReference type="EC" id="5.4.3.8" evidence="1"/>
<dbReference type="EMBL" id="CP001336">
    <property type="protein sequence ID" value="ACL21366.1"/>
    <property type="molecule type" value="Genomic_DNA"/>
</dbReference>
<dbReference type="RefSeq" id="WP_015944558.1">
    <property type="nucleotide sequence ID" value="NC_011830.1"/>
</dbReference>
<dbReference type="SMR" id="B8G2L6"/>
<dbReference type="KEGG" id="dhd:Dhaf_3348"/>
<dbReference type="HOGENOM" id="CLU_016922_1_5_9"/>
<dbReference type="UniPathway" id="UPA00251">
    <property type="reaction ID" value="UER00317"/>
</dbReference>
<dbReference type="Proteomes" id="UP000007726">
    <property type="component" value="Chromosome"/>
</dbReference>
<dbReference type="GO" id="GO:0005737">
    <property type="term" value="C:cytoplasm"/>
    <property type="evidence" value="ECO:0007669"/>
    <property type="project" value="UniProtKB-SubCell"/>
</dbReference>
<dbReference type="GO" id="GO:0042286">
    <property type="term" value="F:glutamate-1-semialdehyde 2,1-aminomutase activity"/>
    <property type="evidence" value="ECO:0007669"/>
    <property type="project" value="UniProtKB-UniRule"/>
</dbReference>
<dbReference type="GO" id="GO:0030170">
    <property type="term" value="F:pyridoxal phosphate binding"/>
    <property type="evidence" value="ECO:0007669"/>
    <property type="project" value="InterPro"/>
</dbReference>
<dbReference type="GO" id="GO:0008483">
    <property type="term" value="F:transaminase activity"/>
    <property type="evidence" value="ECO:0007669"/>
    <property type="project" value="InterPro"/>
</dbReference>
<dbReference type="GO" id="GO:0006782">
    <property type="term" value="P:protoporphyrinogen IX biosynthetic process"/>
    <property type="evidence" value="ECO:0007669"/>
    <property type="project" value="UniProtKB-UniRule"/>
</dbReference>
<dbReference type="CDD" id="cd00610">
    <property type="entry name" value="OAT_like"/>
    <property type="match status" value="1"/>
</dbReference>
<dbReference type="FunFam" id="3.40.640.10:FF:000021">
    <property type="entry name" value="Glutamate-1-semialdehyde 2,1-aminomutase"/>
    <property type="match status" value="1"/>
</dbReference>
<dbReference type="Gene3D" id="3.90.1150.10">
    <property type="entry name" value="Aspartate Aminotransferase, domain 1"/>
    <property type="match status" value="1"/>
</dbReference>
<dbReference type="Gene3D" id="3.40.640.10">
    <property type="entry name" value="Type I PLP-dependent aspartate aminotransferase-like (Major domain)"/>
    <property type="match status" value="1"/>
</dbReference>
<dbReference type="HAMAP" id="MF_00375">
    <property type="entry name" value="HemL_aminotrans_3"/>
    <property type="match status" value="1"/>
</dbReference>
<dbReference type="InterPro" id="IPR004639">
    <property type="entry name" value="4pyrrol_synth_GluAld_NH2Trfase"/>
</dbReference>
<dbReference type="InterPro" id="IPR005814">
    <property type="entry name" value="Aminotrans_3"/>
</dbReference>
<dbReference type="InterPro" id="IPR049704">
    <property type="entry name" value="Aminotrans_3_PPA_site"/>
</dbReference>
<dbReference type="InterPro" id="IPR015424">
    <property type="entry name" value="PyrdxlP-dep_Trfase"/>
</dbReference>
<dbReference type="InterPro" id="IPR015421">
    <property type="entry name" value="PyrdxlP-dep_Trfase_major"/>
</dbReference>
<dbReference type="InterPro" id="IPR015422">
    <property type="entry name" value="PyrdxlP-dep_Trfase_small"/>
</dbReference>
<dbReference type="NCBIfam" id="TIGR00713">
    <property type="entry name" value="hemL"/>
    <property type="match status" value="1"/>
</dbReference>
<dbReference type="NCBIfam" id="NF000818">
    <property type="entry name" value="PRK00062.1"/>
    <property type="match status" value="1"/>
</dbReference>
<dbReference type="PANTHER" id="PTHR43713">
    <property type="entry name" value="GLUTAMATE-1-SEMIALDEHYDE 2,1-AMINOMUTASE"/>
    <property type="match status" value="1"/>
</dbReference>
<dbReference type="PANTHER" id="PTHR43713:SF3">
    <property type="entry name" value="GLUTAMATE-1-SEMIALDEHYDE 2,1-AMINOMUTASE 1, CHLOROPLASTIC-RELATED"/>
    <property type="match status" value="1"/>
</dbReference>
<dbReference type="Pfam" id="PF00202">
    <property type="entry name" value="Aminotran_3"/>
    <property type="match status" value="1"/>
</dbReference>
<dbReference type="SUPFAM" id="SSF53383">
    <property type="entry name" value="PLP-dependent transferases"/>
    <property type="match status" value="1"/>
</dbReference>
<dbReference type="PROSITE" id="PS00600">
    <property type="entry name" value="AA_TRANSFER_CLASS_3"/>
    <property type="match status" value="1"/>
</dbReference>
<proteinExistence type="inferred from homology"/>
<sequence length="430" mass="45748">MGFQDQRSKEAFARANGVLPGGVNSPVRAFKSVGREPIFIAKGQGARLWDIDGNSYLDYVLSWGPLILGHAHPVVVGAIKAAAERGTSYGAPTEIETECAEEVIKAFPSMEMVRMVSSGTEATMSALRLARGVTGRNKIIKFEGCYHGHGDSLLIKAGSGALTFGVPTSPGVPSSVASQTIVAQYNDLEGLKEIFKECGEDIAAVILEPVTGNMGVVLPQPGFLAGLRTLTQDYGSLLIFDEVMTGFRVSYGGAQGRYQIDPDLTCLGKVIGGGLPVAAYGGKRKYMEQVAPSGPIYQAGTLSGNPLAMAAGLATLKLLQQEGVYEGLEKKTARLAEGLQSIAQELGFPIWVNSVGAMFSAFFTDQPVIDFKSACSSDVERFGSFFRGMLERGIYLAPSQYEAVFLSAAHTDADIDYTLEQARDVLKSLG</sequence>
<feature type="chain" id="PRO_0000382306" description="Glutamate-1-semialdehyde 2,1-aminomutase">
    <location>
        <begin position="1"/>
        <end position="430"/>
    </location>
</feature>
<feature type="modified residue" description="N6-(pyridoxal phosphate)lysine" evidence="1">
    <location>
        <position position="269"/>
    </location>
</feature>
<evidence type="ECO:0000255" key="1">
    <source>
        <dbReference type="HAMAP-Rule" id="MF_00375"/>
    </source>
</evidence>
<reference key="1">
    <citation type="journal article" date="2012" name="BMC Microbiol.">
        <title>Genome sequence of Desulfitobacterium hafniense DCB-2, a Gram-positive anaerobe capable of dehalogenation and metal reduction.</title>
        <authorList>
            <person name="Kim S.H."/>
            <person name="Harzman C."/>
            <person name="Davis J.K."/>
            <person name="Hutcheson R."/>
            <person name="Broderick J.B."/>
            <person name="Marsh T.L."/>
            <person name="Tiedje J.M."/>
        </authorList>
    </citation>
    <scope>NUCLEOTIDE SEQUENCE [LARGE SCALE GENOMIC DNA]</scope>
    <source>
        <strain>DSM 10664 / DCB-2</strain>
    </source>
</reference>
<gene>
    <name evidence="1" type="primary">hemL</name>
    <name type="ordered locus">Dhaf_3348</name>
</gene>